<accession>Q6FJG1</accession>
<dbReference type="EC" id="3.6.4.13"/>
<dbReference type="EMBL" id="CR380959">
    <property type="protein sequence ID" value="CAG62609.1"/>
    <property type="molecule type" value="Genomic_DNA"/>
</dbReference>
<dbReference type="RefSeq" id="XP_449633.1">
    <property type="nucleotide sequence ID" value="XM_449633.1"/>
</dbReference>
<dbReference type="SMR" id="Q6FJG1"/>
<dbReference type="FunCoup" id="Q6FJG1">
    <property type="interactions" value="731"/>
</dbReference>
<dbReference type="STRING" id="284593.Q6FJG1"/>
<dbReference type="EnsemblFungi" id="CAGL0M06567g-T">
    <property type="protein sequence ID" value="CAGL0M06567g-T-p1"/>
    <property type="gene ID" value="CAGL0M06567g"/>
</dbReference>
<dbReference type="KEGG" id="cgr:2891681"/>
<dbReference type="CGD" id="CAL0136531">
    <property type="gene designation" value="CAGL0M06567g"/>
</dbReference>
<dbReference type="VEuPathDB" id="FungiDB:B1J91_M06567g"/>
<dbReference type="VEuPathDB" id="FungiDB:CAGL0M06567g"/>
<dbReference type="eggNOG" id="KOG0328">
    <property type="taxonomic scope" value="Eukaryota"/>
</dbReference>
<dbReference type="HOGENOM" id="CLU_003041_1_0_1"/>
<dbReference type="InParanoid" id="Q6FJG1"/>
<dbReference type="OMA" id="DTIHGDK"/>
<dbReference type="Proteomes" id="UP000002428">
    <property type="component" value="Chromosome M"/>
</dbReference>
<dbReference type="GO" id="GO:0097078">
    <property type="term" value="C:FAL1-SGD1 complex"/>
    <property type="evidence" value="ECO:0007669"/>
    <property type="project" value="EnsemblFungi"/>
</dbReference>
<dbReference type="GO" id="GO:0005730">
    <property type="term" value="C:nucleolus"/>
    <property type="evidence" value="ECO:0007669"/>
    <property type="project" value="UniProtKB-SubCell"/>
</dbReference>
<dbReference type="GO" id="GO:0030688">
    <property type="term" value="C:preribosome, small subunit precursor"/>
    <property type="evidence" value="ECO:0007669"/>
    <property type="project" value="EnsemblFungi"/>
</dbReference>
<dbReference type="GO" id="GO:0032040">
    <property type="term" value="C:small-subunit processome"/>
    <property type="evidence" value="ECO:0007669"/>
    <property type="project" value="EnsemblFungi"/>
</dbReference>
<dbReference type="GO" id="GO:0005524">
    <property type="term" value="F:ATP binding"/>
    <property type="evidence" value="ECO:0007669"/>
    <property type="project" value="UniProtKB-KW"/>
</dbReference>
<dbReference type="GO" id="GO:0016887">
    <property type="term" value="F:ATP hydrolysis activity"/>
    <property type="evidence" value="ECO:0007669"/>
    <property type="project" value="RHEA"/>
</dbReference>
<dbReference type="GO" id="GO:0003723">
    <property type="term" value="F:RNA binding"/>
    <property type="evidence" value="ECO:0007669"/>
    <property type="project" value="UniProtKB-KW"/>
</dbReference>
<dbReference type="GO" id="GO:0003724">
    <property type="term" value="F:RNA helicase activity"/>
    <property type="evidence" value="ECO:0007669"/>
    <property type="project" value="UniProtKB-EC"/>
</dbReference>
<dbReference type="GO" id="GO:0000462">
    <property type="term" value="P:maturation of SSU-rRNA from tricistronic rRNA transcript (SSU-rRNA, 5.8S rRNA, LSU-rRNA)"/>
    <property type="evidence" value="ECO:0007669"/>
    <property type="project" value="EnsemblFungi"/>
</dbReference>
<dbReference type="CDD" id="cd18787">
    <property type="entry name" value="SF2_C_DEAD"/>
    <property type="match status" value="1"/>
</dbReference>
<dbReference type="FunFam" id="3.40.50.300:FF:000849">
    <property type="entry name" value="ATP-dependent RNA helicase DBP5"/>
    <property type="match status" value="1"/>
</dbReference>
<dbReference type="FunFam" id="3.40.50.300:FF:000031">
    <property type="entry name" value="Eukaryotic initiation factor 4A-III"/>
    <property type="match status" value="1"/>
</dbReference>
<dbReference type="Gene3D" id="3.40.50.300">
    <property type="entry name" value="P-loop containing nucleotide triphosphate hydrolases"/>
    <property type="match status" value="2"/>
</dbReference>
<dbReference type="InterPro" id="IPR011545">
    <property type="entry name" value="DEAD/DEAH_box_helicase_dom"/>
</dbReference>
<dbReference type="InterPro" id="IPR014001">
    <property type="entry name" value="Helicase_ATP-bd"/>
</dbReference>
<dbReference type="InterPro" id="IPR001650">
    <property type="entry name" value="Helicase_C-like"/>
</dbReference>
<dbReference type="InterPro" id="IPR027417">
    <property type="entry name" value="P-loop_NTPase"/>
</dbReference>
<dbReference type="InterPro" id="IPR000629">
    <property type="entry name" value="RNA-helicase_DEAD-box_CS"/>
</dbReference>
<dbReference type="InterPro" id="IPR014014">
    <property type="entry name" value="RNA_helicase_DEAD_Q_motif"/>
</dbReference>
<dbReference type="PANTHER" id="PTHR47958">
    <property type="entry name" value="ATP-DEPENDENT RNA HELICASE DBP3"/>
    <property type="match status" value="1"/>
</dbReference>
<dbReference type="Pfam" id="PF00270">
    <property type="entry name" value="DEAD"/>
    <property type="match status" value="1"/>
</dbReference>
<dbReference type="Pfam" id="PF00271">
    <property type="entry name" value="Helicase_C"/>
    <property type="match status" value="1"/>
</dbReference>
<dbReference type="SMART" id="SM00487">
    <property type="entry name" value="DEXDc"/>
    <property type="match status" value="1"/>
</dbReference>
<dbReference type="SMART" id="SM00490">
    <property type="entry name" value="HELICc"/>
    <property type="match status" value="1"/>
</dbReference>
<dbReference type="SUPFAM" id="SSF52540">
    <property type="entry name" value="P-loop containing nucleoside triphosphate hydrolases"/>
    <property type="match status" value="2"/>
</dbReference>
<dbReference type="PROSITE" id="PS00039">
    <property type="entry name" value="DEAD_ATP_HELICASE"/>
    <property type="match status" value="1"/>
</dbReference>
<dbReference type="PROSITE" id="PS51192">
    <property type="entry name" value="HELICASE_ATP_BIND_1"/>
    <property type="match status" value="1"/>
</dbReference>
<dbReference type="PROSITE" id="PS51194">
    <property type="entry name" value="HELICASE_CTER"/>
    <property type="match status" value="1"/>
</dbReference>
<dbReference type="PROSITE" id="PS51195">
    <property type="entry name" value="Q_MOTIF"/>
    <property type="match status" value="1"/>
</dbReference>
<gene>
    <name type="primary">FAL1</name>
    <name type="ordered locus">CAGL0M06567g</name>
</gene>
<feature type="chain" id="PRO_0000232144" description="ATP-dependent RNA helicase FAL1">
    <location>
        <begin position="1"/>
        <end position="399"/>
    </location>
</feature>
<feature type="domain" description="Helicase ATP-binding" evidence="2">
    <location>
        <begin position="54"/>
        <end position="227"/>
    </location>
</feature>
<feature type="domain" description="Helicase C-terminal" evidence="3">
    <location>
        <begin position="238"/>
        <end position="399"/>
    </location>
</feature>
<feature type="short sequence motif" description="Q motif">
    <location>
        <begin position="23"/>
        <end position="51"/>
    </location>
</feature>
<feature type="short sequence motif" description="DEAD box">
    <location>
        <begin position="173"/>
        <end position="176"/>
    </location>
</feature>
<feature type="binding site" evidence="2">
    <location>
        <begin position="67"/>
        <end position="74"/>
    </location>
    <ligand>
        <name>ATP</name>
        <dbReference type="ChEBI" id="CHEBI:30616"/>
    </ligand>
</feature>
<sequence>MSFNREHDLKLKFKSSKKLKISATFESMDLKEGLLRGIYSYGFEAPSAIQSRAITQIISGKDVIAQAQSGTGKTATFTIGMLQAIDLKKHDLQALVLSPTRELAAQIGKVVTNLGDYMNVKAYAMTGGKTMKDDLKKIQKHGCQVISGTPGRVLDMIKRRLIETRHVQILVLDEADELLSDTLGFKHQIYDIFTKLPRTSQVVVVSATMSPEILEITKKFMNDPVKILVKRDEITLEGIKQYYVNVEKEEWKFDTLCDIYDSLTITQCVIFCNSKKKVDWLAHKLKQSNFAVISMHGDMKQDERDRVMNEFRTGQSRVLISTDVWARGIDVQQVSLVINYDLPEITENYVHRIGRSGRFGRKGVAINFLTKIDASRMKEIEKYYKIKVKPMPADLSELS</sequence>
<organism>
    <name type="scientific">Candida glabrata (strain ATCC 2001 / BCRC 20586 / JCM 3761 / NBRC 0622 / NRRL Y-65 / CBS 138)</name>
    <name type="common">Yeast</name>
    <name type="synonym">Nakaseomyces glabratus</name>
    <dbReference type="NCBI Taxonomy" id="284593"/>
    <lineage>
        <taxon>Eukaryota</taxon>
        <taxon>Fungi</taxon>
        <taxon>Dikarya</taxon>
        <taxon>Ascomycota</taxon>
        <taxon>Saccharomycotina</taxon>
        <taxon>Saccharomycetes</taxon>
        <taxon>Saccharomycetales</taxon>
        <taxon>Saccharomycetaceae</taxon>
        <taxon>Nakaseomyces</taxon>
    </lineage>
</organism>
<reference key="1">
    <citation type="journal article" date="2004" name="Nature">
        <title>Genome evolution in yeasts.</title>
        <authorList>
            <person name="Dujon B."/>
            <person name="Sherman D."/>
            <person name="Fischer G."/>
            <person name="Durrens P."/>
            <person name="Casaregola S."/>
            <person name="Lafontaine I."/>
            <person name="de Montigny J."/>
            <person name="Marck C."/>
            <person name="Neuveglise C."/>
            <person name="Talla E."/>
            <person name="Goffard N."/>
            <person name="Frangeul L."/>
            <person name="Aigle M."/>
            <person name="Anthouard V."/>
            <person name="Babour A."/>
            <person name="Barbe V."/>
            <person name="Barnay S."/>
            <person name="Blanchin S."/>
            <person name="Beckerich J.-M."/>
            <person name="Beyne E."/>
            <person name="Bleykasten C."/>
            <person name="Boisrame A."/>
            <person name="Boyer J."/>
            <person name="Cattolico L."/>
            <person name="Confanioleri F."/>
            <person name="de Daruvar A."/>
            <person name="Despons L."/>
            <person name="Fabre E."/>
            <person name="Fairhead C."/>
            <person name="Ferry-Dumazet H."/>
            <person name="Groppi A."/>
            <person name="Hantraye F."/>
            <person name="Hennequin C."/>
            <person name="Jauniaux N."/>
            <person name="Joyet P."/>
            <person name="Kachouri R."/>
            <person name="Kerrest A."/>
            <person name="Koszul R."/>
            <person name="Lemaire M."/>
            <person name="Lesur I."/>
            <person name="Ma L."/>
            <person name="Muller H."/>
            <person name="Nicaud J.-M."/>
            <person name="Nikolski M."/>
            <person name="Oztas S."/>
            <person name="Ozier-Kalogeropoulos O."/>
            <person name="Pellenz S."/>
            <person name="Potier S."/>
            <person name="Richard G.-F."/>
            <person name="Straub M.-L."/>
            <person name="Suleau A."/>
            <person name="Swennen D."/>
            <person name="Tekaia F."/>
            <person name="Wesolowski-Louvel M."/>
            <person name="Westhof E."/>
            <person name="Wirth B."/>
            <person name="Zeniou-Meyer M."/>
            <person name="Zivanovic Y."/>
            <person name="Bolotin-Fukuhara M."/>
            <person name="Thierry A."/>
            <person name="Bouchier C."/>
            <person name="Caudron B."/>
            <person name="Scarpelli C."/>
            <person name="Gaillardin C."/>
            <person name="Weissenbach J."/>
            <person name="Wincker P."/>
            <person name="Souciet J.-L."/>
        </authorList>
    </citation>
    <scope>NUCLEOTIDE SEQUENCE [LARGE SCALE GENOMIC DNA]</scope>
    <source>
        <strain>ATCC 2001 / BCRC 20586 / JCM 3761 / NBRC 0622 / NRRL Y-65 / CBS 138</strain>
    </source>
</reference>
<keyword id="KW-0067">ATP-binding</keyword>
<keyword id="KW-0347">Helicase</keyword>
<keyword id="KW-0378">Hydrolase</keyword>
<keyword id="KW-0547">Nucleotide-binding</keyword>
<keyword id="KW-0539">Nucleus</keyword>
<keyword id="KW-1185">Reference proteome</keyword>
<keyword id="KW-0690">Ribosome biogenesis</keyword>
<keyword id="KW-0694">RNA-binding</keyword>
<keyword id="KW-0698">rRNA processing</keyword>
<name>FAL1_CANGA</name>
<evidence type="ECO:0000250" key="1"/>
<evidence type="ECO:0000255" key="2">
    <source>
        <dbReference type="PROSITE-ProRule" id="PRU00541"/>
    </source>
</evidence>
<evidence type="ECO:0000255" key="3">
    <source>
        <dbReference type="PROSITE-ProRule" id="PRU00542"/>
    </source>
</evidence>
<evidence type="ECO:0000305" key="4"/>
<proteinExistence type="inferred from homology"/>
<comment type="function">
    <text evidence="1">ATP-dependent RNA helicase involved in 40S ribosomal subunit biogenesis. Required for the processing and cleavage of 35S pre-rRNA at sites A0, A1, and A2, leading to mature 18S rRNA (By similarity).</text>
</comment>
<comment type="catalytic activity">
    <reaction>
        <text>ATP + H2O = ADP + phosphate + H(+)</text>
        <dbReference type="Rhea" id="RHEA:13065"/>
        <dbReference type="ChEBI" id="CHEBI:15377"/>
        <dbReference type="ChEBI" id="CHEBI:15378"/>
        <dbReference type="ChEBI" id="CHEBI:30616"/>
        <dbReference type="ChEBI" id="CHEBI:43474"/>
        <dbReference type="ChEBI" id="CHEBI:456216"/>
        <dbReference type="EC" id="3.6.4.13"/>
    </reaction>
</comment>
<comment type="subcellular location">
    <subcellularLocation>
        <location evidence="1">Nucleus</location>
        <location evidence="1">Nucleolus</location>
    </subcellularLocation>
</comment>
<comment type="domain">
    <text>The Q motif is unique to and characteristic of the DEAD box family of RNA helicases and controls ATP binding and hydrolysis.</text>
</comment>
<comment type="similarity">
    <text evidence="4">Belongs to the DEAD box helicase family. DDX48/FAL1 subfamily.</text>
</comment>
<protein>
    <recommendedName>
        <fullName>ATP-dependent RNA helicase FAL1</fullName>
        <ecNumber>3.6.4.13</ecNumber>
    </recommendedName>
</protein>